<gene>
    <name evidence="2" type="primary">betI</name>
    <name type="ordered locus">VIBHAR_06181</name>
</gene>
<name>BETI_VIBC1</name>
<sequence length="199" mass="22384">MPKVGMPEIRKPQLVKATMSVIDRVGLHAASISLISKEAGVSTGIINHYFGGKHGLLEETMREILRQLSATIKENLSQLPADAHHQRINAIIDGNFVGFQAENQVAKTWLAFWSYSMHDAQLKRLQRVNERRLLSHLKKELKALLDQDQAELVAHGIASLIDGIWLRGTLNPQGIDAEKARVIINDYLDKQLTFYSKLK</sequence>
<keyword id="KW-0238">DNA-binding</keyword>
<keyword id="KW-0678">Repressor</keyword>
<keyword id="KW-0804">Transcription</keyword>
<keyword id="KW-0805">Transcription regulation</keyword>
<reference key="1">
    <citation type="submission" date="2007-08" db="EMBL/GenBank/DDBJ databases">
        <authorList>
            <consortium name="The Vibrio harveyi Genome Sequencing Project"/>
            <person name="Bassler B."/>
            <person name="Clifton S.W."/>
            <person name="Fulton L."/>
            <person name="Delehaunty K."/>
            <person name="Fronick C."/>
            <person name="Harrison M."/>
            <person name="Markivic C."/>
            <person name="Fulton R."/>
            <person name="Tin-Wollam A.-M."/>
            <person name="Shah N."/>
            <person name="Pepin K."/>
            <person name="Nash W."/>
            <person name="Thiruvilangam P."/>
            <person name="Bhonagiri V."/>
            <person name="Waters C."/>
            <person name="Tu K.C."/>
            <person name="Irgon J."/>
            <person name="Wilson R.K."/>
        </authorList>
    </citation>
    <scope>NUCLEOTIDE SEQUENCE [LARGE SCALE GENOMIC DNA]</scope>
    <source>
        <strain>ATCC BAA-1116 / BB120</strain>
    </source>
</reference>
<feature type="chain" id="PRO_1000083570" description="HTH-type transcriptional regulator BetI">
    <location>
        <begin position="1"/>
        <end position="199"/>
    </location>
</feature>
<feature type="domain" description="HTH tetR-type" evidence="2">
    <location>
        <begin position="8"/>
        <end position="68"/>
    </location>
</feature>
<feature type="DNA-binding region" description="H-T-H motif" evidence="2">
    <location>
        <begin position="31"/>
        <end position="50"/>
    </location>
</feature>
<comment type="function">
    <text evidence="1">Repressor involved in the biosynthesis of the osmoprotectant glycine betaine. It represses transcription of the choline transporter BetT and the genes of BetAB involved in the synthesis of glycine betaine (By similarity).</text>
</comment>
<comment type="pathway">
    <text>Amine and polyamine biosynthesis; betaine biosynthesis via choline pathway [regulation].</text>
</comment>
<protein>
    <recommendedName>
        <fullName evidence="2">HTH-type transcriptional regulator BetI</fullName>
    </recommendedName>
</protein>
<organism>
    <name type="scientific">Vibrio campbellii (strain ATCC BAA-1116)</name>
    <dbReference type="NCBI Taxonomy" id="2902295"/>
    <lineage>
        <taxon>Bacteria</taxon>
        <taxon>Pseudomonadati</taxon>
        <taxon>Pseudomonadota</taxon>
        <taxon>Gammaproteobacteria</taxon>
        <taxon>Vibrionales</taxon>
        <taxon>Vibrionaceae</taxon>
        <taxon>Vibrio</taxon>
    </lineage>
</organism>
<dbReference type="EMBL" id="CP000790">
    <property type="protein sequence ID" value="ABU74073.1"/>
    <property type="molecule type" value="Genomic_DNA"/>
</dbReference>
<dbReference type="RefSeq" id="WP_009700210.1">
    <property type="nucleotide sequence ID" value="NC_022270.1"/>
</dbReference>
<dbReference type="SMR" id="A7N212"/>
<dbReference type="GeneID" id="48231672"/>
<dbReference type="KEGG" id="vha:VIBHAR_06181"/>
<dbReference type="PATRIC" id="fig|338187.25.peg.4149"/>
<dbReference type="UniPathway" id="UPA00529"/>
<dbReference type="Proteomes" id="UP000008152">
    <property type="component" value="Chromosome II"/>
</dbReference>
<dbReference type="GO" id="GO:0003700">
    <property type="term" value="F:DNA-binding transcription factor activity"/>
    <property type="evidence" value="ECO:0007669"/>
    <property type="project" value="UniProtKB-UniRule"/>
</dbReference>
<dbReference type="GO" id="GO:0000976">
    <property type="term" value="F:transcription cis-regulatory region binding"/>
    <property type="evidence" value="ECO:0007669"/>
    <property type="project" value="TreeGrafter"/>
</dbReference>
<dbReference type="GO" id="GO:0019285">
    <property type="term" value="P:glycine betaine biosynthetic process from choline"/>
    <property type="evidence" value="ECO:0007669"/>
    <property type="project" value="UniProtKB-UniRule"/>
</dbReference>
<dbReference type="GO" id="GO:0045892">
    <property type="term" value="P:negative regulation of DNA-templated transcription"/>
    <property type="evidence" value="ECO:0007669"/>
    <property type="project" value="UniProtKB-UniRule"/>
</dbReference>
<dbReference type="Gene3D" id="1.10.357.10">
    <property type="entry name" value="Tetracycline Repressor, domain 2"/>
    <property type="match status" value="1"/>
</dbReference>
<dbReference type="HAMAP" id="MF_00768">
    <property type="entry name" value="HTH_type_BetI"/>
    <property type="match status" value="1"/>
</dbReference>
<dbReference type="InterPro" id="IPR039538">
    <property type="entry name" value="BetI_C"/>
</dbReference>
<dbReference type="InterPro" id="IPR023772">
    <property type="entry name" value="DNA-bd_HTH_TetR-type_CS"/>
</dbReference>
<dbReference type="InterPro" id="IPR009057">
    <property type="entry name" value="Homeodomain-like_sf"/>
</dbReference>
<dbReference type="InterPro" id="IPR050109">
    <property type="entry name" value="HTH-type_TetR-like_transc_reg"/>
</dbReference>
<dbReference type="InterPro" id="IPR001647">
    <property type="entry name" value="HTH_TetR"/>
</dbReference>
<dbReference type="InterPro" id="IPR036271">
    <property type="entry name" value="Tet_transcr_reg_TetR-rel_C_sf"/>
</dbReference>
<dbReference type="InterPro" id="IPR017757">
    <property type="entry name" value="Tscrpt_rep_BetI"/>
</dbReference>
<dbReference type="NCBIfam" id="TIGR03384">
    <property type="entry name" value="betaine_BetI"/>
    <property type="match status" value="1"/>
</dbReference>
<dbReference type="NCBIfam" id="NF001978">
    <property type="entry name" value="PRK00767.1"/>
    <property type="match status" value="1"/>
</dbReference>
<dbReference type="PANTHER" id="PTHR30055:SF234">
    <property type="entry name" value="HTH-TYPE TRANSCRIPTIONAL REGULATOR BETI"/>
    <property type="match status" value="1"/>
</dbReference>
<dbReference type="PANTHER" id="PTHR30055">
    <property type="entry name" value="HTH-TYPE TRANSCRIPTIONAL REGULATOR RUTR"/>
    <property type="match status" value="1"/>
</dbReference>
<dbReference type="Pfam" id="PF13977">
    <property type="entry name" value="TetR_C_6"/>
    <property type="match status" value="1"/>
</dbReference>
<dbReference type="Pfam" id="PF00440">
    <property type="entry name" value="TetR_N"/>
    <property type="match status" value="1"/>
</dbReference>
<dbReference type="SUPFAM" id="SSF46689">
    <property type="entry name" value="Homeodomain-like"/>
    <property type="match status" value="1"/>
</dbReference>
<dbReference type="SUPFAM" id="SSF48498">
    <property type="entry name" value="Tetracyclin repressor-like, C-terminal domain"/>
    <property type="match status" value="1"/>
</dbReference>
<dbReference type="PROSITE" id="PS01081">
    <property type="entry name" value="HTH_TETR_1"/>
    <property type="match status" value="1"/>
</dbReference>
<dbReference type="PROSITE" id="PS50977">
    <property type="entry name" value="HTH_TETR_2"/>
    <property type="match status" value="1"/>
</dbReference>
<proteinExistence type="inferred from homology"/>
<accession>A7N212</accession>
<evidence type="ECO:0000250" key="1"/>
<evidence type="ECO:0000255" key="2">
    <source>
        <dbReference type="HAMAP-Rule" id="MF_00768"/>
    </source>
</evidence>